<accession>Q636J4</accession>
<protein>
    <recommendedName>
        <fullName evidence="1">Methylenetetrahydrofolate--tRNA-(uracil-5-)-methyltransferase TrmFO</fullName>
        <ecNumber evidence="1">2.1.1.74</ecNumber>
    </recommendedName>
    <alternativeName>
        <fullName evidence="1">Folate-dependent tRNA (uracil-5-)-methyltransferase</fullName>
    </alternativeName>
    <alternativeName>
        <fullName evidence="1">Folate-dependent tRNA(M-5-U54)-methyltransferase</fullName>
    </alternativeName>
</protein>
<evidence type="ECO:0000255" key="1">
    <source>
        <dbReference type="HAMAP-Rule" id="MF_01037"/>
    </source>
</evidence>
<reference key="1">
    <citation type="journal article" date="2006" name="J. Bacteriol.">
        <title>Pathogenomic sequence analysis of Bacillus cereus and Bacillus thuringiensis isolates closely related to Bacillus anthracis.</title>
        <authorList>
            <person name="Han C.S."/>
            <person name="Xie G."/>
            <person name="Challacombe J.F."/>
            <person name="Altherr M.R."/>
            <person name="Bhotika S.S."/>
            <person name="Bruce D."/>
            <person name="Campbell C.S."/>
            <person name="Campbell M.L."/>
            <person name="Chen J."/>
            <person name="Chertkov O."/>
            <person name="Cleland C."/>
            <person name="Dimitrijevic M."/>
            <person name="Doggett N.A."/>
            <person name="Fawcett J.J."/>
            <person name="Glavina T."/>
            <person name="Goodwin L.A."/>
            <person name="Hill K.K."/>
            <person name="Hitchcock P."/>
            <person name="Jackson P.J."/>
            <person name="Keim P."/>
            <person name="Kewalramani A.R."/>
            <person name="Longmire J."/>
            <person name="Lucas S."/>
            <person name="Malfatti S."/>
            <person name="McMurry K."/>
            <person name="Meincke L.J."/>
            <person name="Misra M."/>
            <person name="Moseman B.L."/>
            <person name="Mundt M."/>
            <person name="Munk A.C."/>
            <person name="Okinaka R.T."/>
            <person name="Parson-Quintana B."/>
            <person name="Reilly L.P."/>
            <person name="Richardson P."/>
            <person name="Robinson D.L."/>
            <person name="Rubin E."/>
            <person name="Saunders E."/>
            <person name="Tapia R."/>
            <person name="Tesmer J.G."/>
            <person name="Thayer N."/>
            <person name="Thompson L.S."/>
            <person name="Tice H."/>
            <person name="Ticknor L.O."/>
            <person name="Wills P.L."/>
            <person name="Brettin T.S."/>
            <person name="Gilna P."/>
        </authorList>
    </citation>
    <scope>NUCLEOTIDE SEQUENCE [LARGE SCALE GENOMIC DNA]</scope>
    <source>
        <strain>ZK / E33L</strain>
    </source>
</reference>
<proteinExistence type="inferred from homology"/>
<comment type="function">
    <text evidence="1">Catalyzes the folate-dependent formation of 5-methyl-uridine at position 54 (M-5-U54) in all tRNAs.</text>
</comment>
<comment type="catalytic activity">
    <reaction evidence="1">
        <text>uridine(54) in tRNA + (6R)-5,10-methylene-5,6,7,8-tetrahydrofolate + NADH + H(+) = 5-methyluridine(54) in tRNA + (6S)-5,6,7,8-tetrahydrofolate + NAD(+)</text>
        <dbReference type="Rhea" id="RHEA:16873"/>
        <dbReference type="Rhea" id="RHEA-COMP:10167"/>
        <dbReference type="Rhea" id="RHEA-COMP:10193"/>
        <dbReference type="ChEBI" id="CHEBI:15378"/>
        <dbReference type="ChEBI" id="CHEBI:15636"/>
        <dbReference type="ChEBI" id="CHEBI:57453"/>
        <dbReference type="ChEBI" id="CHEBI:57540"/>
        <dbReference type="ChEBI" id="CHEBI:57945"/>
        <dbReference type="ChEBI" id="CHEBI:65315"/>
        <dbReference type="ChEBI" id="CHEBI:74447"/>
        <dbReference type="EC" id="2.1.1.74"/>
    </reaction>
</comment>
<comment type="catalytic activity">
    <reaction evidence="1">
        <text>uridine(54) in tRNA + (6R)-5,10-methylene-5,6,7,8-tetrahydrofolate + NADPH + H(+) = 5-methyluridine(54) in tRNA + (6S)-5,6,7,8-tetrahydrofolate + NADP(+)</text>
        <dbReference type="Rhea" id="RHEA:62372"/>
        <dbReference type="Rhea" id="RHEA-COMP:10167"/>
        <dbReference type="Rhea" id="RHEA-COMP:10193"/>
        <dbReference type="ChEBI" id="CHEBI:15378"/>
        <dbReference type="ChEBI" id="CHEBI:15636"/>
        <dbReference type="ChEBI" id="CHEBI:57453"/>
        <dbReference type="ChEBI" id="CHEBI:57783"/>
        <dbReference type="ChEBI" id="CHEBI:58349"/>
        <dbReference type="ChEBI" id="CHEBI:65315"/>
        <dbReference type="ChEBI" id="CHEBI:74447"/>
        <dbReference type="EC" id="2.1.1.74"/>
    </reaction>
</comment>
<comment type="cofactor">
    <cofactor evidence="1">
        <name>FAD</name>
        <dbReference type="ChEBI" id="CHEBI:57692"/>
    </cofactor>
</comment>
<comment type="subcellular location">
    <subcellularLocation>
        <location evidence="1">Cytoplasm</location>
    </subcellularLocation>
</comment>
<comment type="similarity">
    <text evidence="1">Belongs to the MnmG family. TrmFO subfamily.</text>
</comment>
<name>TRMFO_BACCZ</name>
<dbReference type="EC" id="2.1.1.74" evidence="1"/>
<dbReference type="EMBL" id="CP000001">
    <property type="protein sequence ID" value="AAU16675.1"/>
    <property type="molecule type" value="Genomic_DNA"/>
</dbReference>
<dbReference type="RefSeq" id="WP_001991958.1">
    <property type="nucleotide sequence ID" value="NZ_CP009968.1"/>
</dbReference>
<dbReference type="SMR" id="Q636J4"/>
<dbReference type="KEGG" id="bcz:BCE33L3591"/>
<dbReference type="PATRIC" id="fig|288681.22.peg.1820"/>
<dbReference type="Proteomes" id="UP000002612">
    <property type="component" value="Chromosome"/>
</dbReference>
<dbReference type="GO" id="GO:0005829">
    <property type="term" value="C:cytosol"/>
    <property type="evidence" value="ECO:0007669"/>
    <property type="project" value="TreeGrafter"/>
</dbReference>
<dbReference type="GO" id="GO:0050660">
    <property type="term" value="F:flavin adenine dinucleotide binding"/>
    <property type="evidence" value="ECO:0007669"/>
    <property type="project" value="UniProtKB-UniRule"/>
</dbReference>
<dbReference type="GO" id="GO:0047151">
    <property type="term" value="F:tRNA (uracil(54)-C5)-methyltransferase activity, 5,10-methylenetetrahydrofolate-dependent"/>
    <property type="evidence" value="ECO:0007669"/>
    <property type="project" value="UniProtKB-UniRule"/>
</dbReference>
<dbReference type="GO" id="GO:0030488">
    <property type="term" value="P:tRNA methylation"/>
    <property type="evidence" value="ECO:0007669"/>
    <property type="project" value="TreeGrafter"/>
</dbReference>
<dbReference type="GO" id="GO:0002098">
    <property type="term" value="P:tRNA wobble uridine modification"/>
    <property type="evidence" value="ECO:0007669"/>
    <property type="project" value="TreeGrafter"/>
</dbReference>
<dbReference type="FunFam" id="3.50.50.60:FF:000035">
    <property type="entry name" value="Methylenetetrahydrofolate--tRNA-(uracil-5-)-methyltransferase TrmFO"/>
    <property type="match status" value="1"/>
</dbReference>
<dbReference type="FunFam" id="3.50.50.60:FF:000040">
    <property type="entry name" value="Methylenetetrahydrofolate--tRNA-(uracil-5-)-methyltransferase TrmFO"/>
    <property type="match status" value="1"/>
</dbReference>
<dbReference type="Gene3D" id="3.50.50.60">
    <property type="entry name" value="FAD/NAD(P)-binding domain"/>
    <property type="match status" value="2"/>
</dbReference>
<dbReference type="HAMAP" id="MF_01037">
    <property type="entry name" value="TrmFO"/>
    <property type="match status" value="1"/>
</dbReference>
<dbReference type="InterPro" id="IPR036188">
    <property type="entry name" value="FAD/NAD-bd_sf"/>
</dbReference>
<dbReference type="InterPro" id="IPR002218">
    <property type="entry name" value="MnmG-rel"/>
</dbReference>
<dbReference type="InterPro" id="IPR020595">
    <property type="entry name" value="MnmG-rel_CS"/>
</dbReference>
<dbReference type="InterPro" id="IPR040131">
    <property type="entry name" value="MnmG_N"/>
</dbReference>
<dbReference type="InterPro" id="IPR004417">
    <property type="entry name" value="TrmFO"/>
</dbReference>
<dbReference type="NCBIfam" id="TIGR00137">
    <property type="entry name" value="gid_trmFO"/>
    <property type="match status" value="1"/>
</dbReference>
<dbReference type="NCBIfam" id="NF003739">
    <property type="entry name" value="PRK05335.1"/>
    <property type="match status" value="1"/>
</dbReference>
<dbReference type="PANTHER" id="PTHR11806">
    <property type="entry name" value="GLUCOSE INHIBITED DIVISION PROTEIN A"/>
    <property type="match status" value="1"/>
</dbReference>
<dbReference type="PANTHER" id="PTHR11806:SF2">
    <property type="entry name" value="METHYLENETETRAHYDROFOLATE--TRNA-(URACIL-5-)-METHYLTRANSFERASE TRMFO"/>
    <property type="match status" value="1"/>
</dbReference>
<dbReference type="Pfam" id="PF01134">
    <property type="entry name" value="GIDA"/>
    <property type="match status" value="1"/>
</dbReference>
<dbReference type="SUPFAM" id="SSF51905">
    <property type="entry name" value="FAD/NAD(P)-binding domain"/>
    <property type="match status" value="1"/>
</dbReference>
<dbReference type="PROSITE" id="PS01281">
    <property type="entry name" value="GIDA_2"/>
    <property type="match status" value="1"/>
</dbReference>
<sequence length="434" mass="48038">MTTQVVNVIGAGLAGSEAAYQIAKRGVQVRLYEMRPVRQTPAHHTDKFAELVCSNSLRANTLTNAVGVIKEEMRLMDSVIIRAADECSVPAGGALAVDRHEFAAKVTEYVKNHPNVTVMNEEITEIPEGPTIIATGPLTSPDLSAQLKELTGEDYFYFYDAAAPIVEKDSIDMNKVYLKSRYDKGEAAYLNCPMTEEEFDRFYEALIAAETVPLKEFEKEIFFEGCMPVEVMASRGRQTLVFGPMKPVGLEDPKTGKTPYAVVQLRQDDAAGTLYNIVGFQTHLKWGPQKEVLQLIPGLENAEIVRYGVMHRNTFINSPNLLRPTYQYKQRDDLFFAGQMTGVEGYVESAASGLLAGINAARLVKGEEPVVLPPVTAMGSMANYITATNAKNFQPMNANFGLFAPLEKKIKKKAERNEAYATRALETIRNFVNI</sequence>
<gene>
    <name evidence="1" type="primary">trmFO</name>
    <name type="synonym">gid</name>
    <name type="ordered locus">BCE33L3591</name>
</gene>
<organism>
    <name type="scientific">Bacillus cereus (strain ZK / E33L)</name>
    <dbReference type="NCBI Taxonomy" id="288681"/>
    <lineage>
        <taxon>Bacteria</taxon>
        <taxon>Bacillati</taxon>
        <taxon>Bacillota</taxon>
        <taxon>Bacilli</taxon>
        <taxon>Bacillales</taxon>
        <taxon>Bacillaceae</taxon>
        <taxon>Bacillus</taxon>
        <taxon>Bacillus cereus group</taxon>
    </lineage>
</organism>
<feature type="chain" id="PRO_1000063909" description="Methylenetetrahydrofolate--tRNA-(uracil-5-)-methyltransferase TrmFO">
    <location>
        <begin position="1"/>
        <end position="434"/>
    </location>
</feature>
<feature type="binding site" evidence="1">
    <location>
        <begin position="10"/>
        <end position="15"/>
    </location>
    <ligand>
        <name>FAD</name>
        <dbReference type="ChEBI" id="CHEBI:57692"/>
    </ligand>
</feature>
<keyword id="KW-0963">Cytoplasm</keyword>
<keyword id="KW-0274">FAD</keyword>
<keyword id="KW-0285">Flavoprotein</keyword>
<keyword id="KW-0489">Methyltransferase</keyword>
<keyword id="KW-0520">NAD</keyword>
<keyword id="KW-0521">NADP</keyword>
<keyword id="KW-0808">Transferase</keyword>
<keyword id="KW-0819">tRNA processing</keyword>